<evidence type="ECO:0000255" key="1">
    <source>
        <dbReference type="HAMAP-Rule" id="MF_00025"/>
    </source>
</evidence>
<proteinExistence type="inferred from homology"/>
<keyword id="KW-0963">Cytoplasm</keyword>
<keyword id="KW-0240">DNA-directed RNA polymerase</keyword>
<keyword id="KW-0548">Nucleotidyltransferase</keyword>
<keyword id="KW-1185">Reference proteome</keyword>
<keyword id="KW-0804">Transcription</keyword>
<keyword id="KW-0808">Transferase</keyword>
<dbReference type="EC" id="2.7.7.6" evidence="1"/>
<dbReference type="EMBL" id="CP000102">
    <property type="protein sequence ID" value="ABC57752.1"/>
    <property type="molecule type" value="Genomic_DNA"/>
</dbReference>
<dbReference type="SMR" id="Q2NEK1"/>
<dbReference type="STRING" id="339860.Msp_1376"/>
<dbReference type="KEGG" id="mst:Msp_1376"/>
<dbReference type="eggNOG" id="arCOG04258">
    <property type="taxonomic scope" value="Archaea"/>
</dbReference>
<dbReference type="HOGENOM" id="CLU_058320_4_0_2"/>
<dbReference type="OrthoDB" id="30537at2157"/>
<dbReference type="Proteomes" id="UP000001931">
    <property type="component" value="Chromosome"/>
</dbReference>
<dbReference type="GO" id="GO:0005737">
    <property type="term" value="C:cytoplasm"/>
    <property type="evidence" value="ECO:0007669"/>
    <property type="project" value="UniProtKB-SubCell"/>
</dbReference>
<dbReference type="GO" id="GO:0000428">
    <property type="term" value="C:DNA-directed RNA polymerase complex"/>
    <property type="evidence" value="ECO:0007669"/>
    <property type="project" value="UniProtKB-KW"/>
</dbReference>
<dbReference type="GO" id="GO:0003677">
    <property type="term" value="F:DNA binding"/>
    <property type="evidence" value="ECO:0007669"/>
    <property type="project" value="InterPro"/>
</dbReference>
<dbReference type="GO" id="GO:0003899">
    <property type="term" value="F:DNA-directed RNA polymerase activity"/>
    <property type="evidence" value="ECO:0007669"/>
    <property type="project" value="UniProtKB-UniRule"/>
</dbReference>
<dbReference type="GO" id="GO:0006366">
    <property type="term" value="P:transcription by RNA polymerase II"/>
    <property type="evidence" value="ECO:0007669"/>
    <property type="project" value="TreeGrafter"/>
</dbReference>
<dbReference type="GO" id="GO:0006362">
    <property type="term" value="P:transcription elongation by RNA polymerase I"/>
    <property type="evidence" value="ECO:0007669"/>
    <property type="project" value="TreeGrafter"/>
</dbReference>
<dbReference type="GO" id="GO:0042797">
    <property type="term" value="P:tRNA transcription by RNA polymerase III"/>
    <property type="evidence" value="ECO:0007669"/>
    <property type="project" value="TreeGrafter"/>
</dbReference>
<dbReference type="Gene3D" id="3.90.940.20">
    <property type="entry name" value="RPB5-like RNA polymerase subunit"/>
    <property type="match status" value="1"/>
</dbReference>
<dbReference type="HAMAP" id="MF_00025">
    <property type="entry name" value="RNApol_Rpo5_RPB5"/>
    <property type="match status" value="1"/>
</dbReference>
<dbReference type="InterPro" id="IPR014381">
    <property type="entry name" value="Arch_Rpo5/euc_Rpb5"/>
</dbReference>
<dbReference type="InterPro" id="IPR000783">
    <property type="entry name" value="RNA_pol_subH/Rpb5_C"/>
</dbReference>
<dbReference type="InterPro" id="IPR035913">
    <property type="entry name" value="RPB5-like_sf"/>
</dbReference>
<dbReference type="NCBIfam" id="NF007129">
    <property type="entry name" value="PRK09570.1"/>
    <property type="match status" value="1"/>
</dbReference>
<dbReference type="PANTHER" id="PTHR10535">
    <property type="entry name" value="DNA-DIRECTED RNA POLYMERASES I, II, AND III SUBUNIT RPABC1"/>
    <property type="match status" value="1"/>
</dbReference>
<dbReference type="PANTHER" id="PTHR10535:SF0">
    <property type="entry name" value="DNA-DIRECTED RNA POLYMERASES I, II, AND III SUBUNIT RPABC1"/>
    <property type="match status" value="1"/>
</dbReference>
<dbReference type="Pfam" id="PF01191">
    <property type="entry name" value="RNA_pol_Rpb5_C"/>
    <property type="match status" value="1"/>
</dbReference>
<dbReference type="SUPFAM" id="SSF55287">
    <property type="entry name" value="RPB5-like RNA polymerase subunit"/>
    <property type="match status" value="1"/>
</dbReference>
<reference key="1">
    <citation type="journal article" date="2006" name="J. Bacteriol.">
        <title>The genome sequence of Methanosphaera stadtmanae reveals why this human intestinal archaeon is restricted to methanol and H2 for methane formation and ATP synthesis.</title>
        <authorList>
            <person name="Fricke W.F."/>
            <person name="Seedorf H."/>
            <person name="Henne A."/>
            <person name="Kruer M."/>
            <person name="Liesegang H."/>
            <person name="Hedderich R."/>
            <person name="Gottschalk G."/>
            <person name="Thauer R.K."/>
        </authorList>
    </citation>
    <scope>NUCLEOTIDE SEQUENCE [LARGE SCALE GENOMIC DNA]</scope>
    <source>
        <strain>ATCC 43021 / DSM 3091 / JCM 11832 / MCB-3</strain>
    </source>
</reference>
<gene>
    <name evidence="1" type="primary">rpo5</name>
    <name evidence="1" type="synonym">rpoH</name>
    <name type="ordered locus">Msp_1376</name>
</gene>
<protein>
    <recommendedName>
        <fullName evidence="1">DNA-directed RNA polymerase subunit Rpo5</fullName>
        <ecNumber evidence="1">2.7.7.6</ecNumber>
    </recommendedName>
    <alternativeName>
        <fullName evidence="1">DNA-directed RNA polymerase subunit H</fullName>
    </alternativeName>
</protein>
<accession>Q2NEK1</accession>
<organism>
    <name type="scientific">Methanosphaera stadtmanae (strain ATCC 43021 / DSM 3091 / JCM 11832 / MCB-3)</name>
    <dbReference type="NCBI Taxonomy" id="339860"/>
    <lineage>
        <taxon>Archaea</taxon>
        <taxon>Methanobacteriati</taxon>
        <taxon>Methanobacteriota</taxon>
        <taxon>Methanomada group</taxon>
        <taxon>Methanobacteria</taxon>
        <taxon>Methanobacteriales</taxon>
        <taxon>Methanobacteriaceae</taxon>
        <taxon>Methanosphaera</taxon>
    </lineage>
</organism>
<sequence>MKADILQHKLVPEHTILSEEEAQKVLDDLNVRLDQIPKILPTDPVVKAIDAKVGDILKITRKSETAGIFVAYRVVRD</sequence>
<name>RPO5_METST</name>
<comment type="function">
    <text evidence="1">DNA-dependent RNA polymerase (RNAP) catalyzes the transcription of DNA into RNA using the four ribonucleoside triphosphates as substrates.</text>
</comment>
<comment type="catalytic activity">
    <reaction evidence="1">
        <text>RNA(n) + a ribonucleoside 5'-triphosphate = RNA(n+1) + diphosphate</text>
        <dbReference type="Rhea" id="RHEA:21248"/>
        <dbReference type="Rhea" id="RHEA-COMP:14527"/>
        <dbReference type="Rhea" id="RHEA-COMP:17342"/>
        <dbReference type="ChEBI" id="CHEBI:33019"/>
        <dbReference type="ChEBI" id="CHEBI:61557"/>
        <dbReference type="ChEBI" id="CHEBI:140395"/>
        <dbReference type="EC" id="2.7.7.6"/>
    </reaction>
</comment>
<comment type="subunit">
    <text evidence="1">Part of the RNA polymerase complex.</text>
</comment>
<comment type="subcellular location">
    <subcellularLocation>
        <location evidence="1">Cytoplasm</location>
    </subcellularLocation>
</comment>
<comment type="similarity">
    <text evidence="1">Belongs to the archaeal Rpo5/eukaryotic RPB5 RNA polymerase subunit family.</text>
</comment>
<feature type="chain" id="PRO_1000074386" description="DNA-directed RNA polymerase subunit Rpo5">
    <location>
        <begin position="1"/>
        <end position="77"/>
    </location>
</feature>